<comment type="function">
    <text evidence="1">Catalyzes the conversion of urocanate to 4-imidazolone-5-propionate.</text>
</comment>
<comment type="catalytic activity">
    <reaction evidence="1">
        <text>4-imidazolone-5-propanoate = trans-urocanate + H2O</text>
        <dbReference type="Rhea" id="RHEA:13101"/>
        <dbReference type="ChEBI" id="CHEBI:15377"/>
        <dbReference type="ChEBI" id="CHEBI:17771"/>
        <dbReference type="ChEBI" id="CHEBI:77893"/>
        <dbReference type="EC" id="4.2.1.49"/>
    </reaction>
</comment>
<comment type="cofactor">
    <cofactor evidence="1">
        <name>NAD(+)</name>
        <dbReference type="ChEBI" id="CHEBI:57540"/>
    </cofactor>
    <text evidence="1">Binds 1 NAD(+) per subunit.</text>
</comment>
<comment type="pathway">
    <text evidence="1">Amino-acid degradation; L-histidine degradation into L-glutamate; N-formimidoyl-L-glutamate from L-histidine: step 2/3.</text>
</comment>
<comment type="subcellular location">
    <subcellularLocation>
        <location evidence="1">Cytoplasm</location>
    </subcellularLocation>
</comment>
<comment type="similarity">
    <text evidence="1">Belongs to the urocanase family.</text>
</comment>
<proteinExistence type="inferred from homology"/>
<evidence type="ECO:0000255" key="1">
    <source>
        <dbReference type="HAMAP-Rule" id="MF_00577"/>
    </source>
</evidence>
<keyword id="KW-0963">Cytoplasm</keyword>
<keyword id="KW-0369">Histidine metabolism</keyword>
<keyword id="KW-0456">Lyase</keyword>
<keyword id="KW-0520">NAD</keyword>
<sequence>MDKRHDPSRRIIAPHGTRLSCKSWLTEAPMRMLMNNLHPDVAERPEDLVVYGGIGRAARDWDCYDKIIEVLQRLEDDETLLVQSGKPVGVFRTHADAPRVLIANSNLVPHWANWEHFNELDKLGLAMYGQMTAGSWIYIGTQGIVQGTYETFVSVAKQHFEGISKGKWILTGGLGGMGGAQTLAGTMAGFSVLACEVDETRIDFRLRTRYVDKKATSLDEALAMIEEANQAGKPVSVGLLANAADVFAELVKRGVTPDVVTDQTSAHDPLNGYLPQGWTMAEAAAMRKTDEAGVVKAAKASMAVQVQAMLDLQTAGAATLDYGNNIRQMAFEVGVENAFDFPGFVPAYIRPLFCEGIGPFRWVALSGDPEDIYKTDAKVKELIPDNPHLHNWLDMARERIAFQGLPARICWVGLKDRARLALAFNEMVKNGELSAPVVIGRDHLDSGSVASPNRETESMLDGSDAVSDWPLLNALLNTASGATWVSLHHGGGVGMGFSQHSGVVIVCDGTDAAAKRVGRVLWNDPATGVMRHADAGYEIAKNCAKEQGLDLPMQE</sequence>
<gene>
    <name evidence="1" type="primary">hutU</name>
    <name type="ordered locus">Sbal223_0102</name>
</gene>
<organism>
    <name type="scientific">Shewanella baltica (strain OS223)</name>
    <dbReference type="NCBI Taxonomy" id="407976"/>
    <lineage>
        <taxon>Bacteria</taxon>
        <taxon>Pseudomonadati</taxon>
        <taxon>Pseudomonadota</taxon>
        <taxon>Gammaproteobacteria</taxon>
        <taxon>Alteromonadales</taxon>
        <taxon>Shewanellaceae</taxon>
        <taxon>Shewanella</taxon>
    </lineage>
</organism>
<accession>B8E3L7</accession>
<feature type="chain" id="PRO_1000199903" description="Urocanate hydratase">
    <location>
        <begin position="1"/>
        <end position="555"/>
    </location>
</feature>
<feature type="active site" evidence="1">
    <location>
        <position position="410"/>
    </location>
</feature>
<feature type="binding site" evidence="1">
    <location>
        <begin position="52"/>
        <end position="53"/>
    </location>
    <ligand>
        <name>NAD(+)</name>
        <dbReference type="ChEBI" id="CHEBI:57540"/>
    </ligand>
</feature>
<feature type="binding site" evidence="1">
    <location>
        <position position="130"/>
    </location>
    <ligand>
        <name>NAD(+)</name>
        <dbReference type="ChEBI" id="CHEBI:57540"/>
    </ligand>
</feature>
<feature type="binding site" evidence="1">
    <location>
        <begin position="176"/>
        <end position="178"/>
    </location>
    <ligand>
        <name>NAD(+)</name>
        <dbReference type="ChEBI" id="CHEBI:57540"/>
    </ligand>
</feature>
<feature type="binding site" evidence="1">
    <location>
        <position position="196"/>
    </location>
    <ligand>
        <name>NAD(+)</name>
        <dbReference type="ChEBI" id="CHEBI:57540"/>
    </ligand>
</feature>
<feature type="binding site" evidence="1">
    <location>
        <position position="201"/>
    </location>
    <ligand>
        <name>NAD(+)</name>
        <dbReference type="ChEBI" id="CHEBI:57540"/>
    </ligand>
</feature>
<feature type="binding site" evidence="1">
    <location>
        <begin position="242"/>
        <end position="243"/>
    </location>
    <ligand>
        <name>NAD(+)</name>
        <dbReference type="ChEBI" id="CHEBI:57540"/>
    </ligand>
</feature>
<feature type="binding site" evidence="1">
    <location>
        <begin position="263"/>
        <end position="267"/>
    </location>
    <ligand>
        <name>NAD(+)</name>
        <dbReference type="ChEBI" id="CHEBI:57540"/>
    </ligand>
</feature>
<feature type="binding site" evidence="1">
    <location>
        <begin position="273"/>
        <end position="274"/>
    </location>
    <ligand>
        <name>NAD(+)</name>
        <dbReference type="ChEBI" id="CHEBI:57540"/>
    </ligand>
</feature>
<feature type="binding site" evidence="1">
    <location>
        <position position="322"/>
    </location>
    <ligand>
        <name>NAD(+)</name>
        <dbReference type="ChEBI" id="CHEBI:57540"/>
    </ligand>
</feature>
<feature type="binding site" evidence="1">
    <location>
        <position position="492"/>
    </location>
    <ligand>
        <name>NAD(+)</name>
        <dbReference type="ChEBI" id="CHEBI:57540"/>
    </ligand>
</feature>
<dbReference type="EC" id="4.2.1.49" evidence="1"/>
<dbReference type="EMBL" id="CP001252">
    <property type="protein sequence ID" value="ACK44643.1"/>
    <property type="molecule type" value="Genomic_DNA"/>
</dbReference>
<dbReference type="RefSeq" id="WP_012586397.1">
    <property type="nucleotide sequence ID" value="NC_011663.1"/>
</dbReference>
<dbReference type="SMR" id="B8E3L7"/>
<dbReference type="KEGG" id="sbp:Sbal223_0102"/>
<dbReference type="HOGENOM" id="CLU_018868_0_1_6"/>
<dbReference type="UniPathway" id="UPA00379">
    <property type="reaction ID" value="UER00550"/>
</dbReference>
<dbReference type="Proteomes" id="UP000002507">
    <property type="component" value="Chromosome"/>
</dbReference>
<dbReference type="GO" id="GO:0005737">
    <property type="term" value="C:cytoplasm"/>
    <property type="evidence" value="ECO:0007669"/>
    <property type="project" value="UniProtKB-SubCell"/>
</dbReference>
<dbReference type="GO" id="GO:0016153">
    <property type="term" value="F:urocanate hydratase activity"/>
    <property type="evidence" value="ECO:0007669"/>
    <property type="project" value="UniProtKB-UniRule"/>
</dbReference>
<dbReference type="GO" id="GO:0019556">
    <property type="term" value="P:L-histidine catabolic process to glutamate and formamide"/>
    <property type="evidence" value="ECO:0007669"/>
    <property type="project" value="UniProtKB-UniPathway"/>
</dbReference>
<dbReference type="GO" id="GO:0019557">
    <property type="term" value="P:L-histidine catabolic process to glutamate and formate"/>
    <property type="evidence" value="ECO:0007669"/>
    <property type="project" value="UniProtKB-UniPathway"/>
</dbReference>
<dbReference type="FunFam" id="3.40.50.10730:FF:000001">
    <property type="entry name" value="Urocanate hydratase"/>
    <property type="match status" value="1"/>
</dbReference>
<dbReference type="Gene3D" id="3.40.50.10730">
    <property type="entry name" value="Urocanase like domains"/>
    <property type="match status" value="1"/>
</dbReference>
<dbReference type="Gene3D" id="3.40.1770.10">
    <property type="entry name" value="Urocanase superfamily"/>
    <property type="match status" value="1"/>
</dbReference>
<dbReference type="HAMAP" id="MF_00577">
    <property type="entry name" value="HutU"/>
    <property type="match status" value="1"/>
</dbReference>
<dbReference type="InterPro" id="IPR055351">
    <property type="entry name" value="Urocanase"/>
</dbReference>
<dbReference type="InterPro" id="IPR023637">
    <property type="entry name" value="Urocanase-like"/>
</dbReference>
<dbReference type="InterPro" id="IPR035401">
    <property type="entry name" value="Urocanase_C"/>
</dbReference>
<dbReference type="InterPro" id="IPR038364">
    <property type="entry name" value="Urocanase_central_sf"/>
</dbReference>
<dbReference type="InterPro" id="IPR023636">
    <property type="entry name" value="Urocanase_CS"/>
</dbReference>
<dbReference type="InterPro" id="IPR035400">
    <property type="entry name" value="Urocanase_N"/>
</dbReference>
<dbReference type="InterPro" id="IPR035085">
    <property type="entry name" value="Urocanase_Rossmann-like"/>
</dbReference>
<dbReference type="InterPro" id="IPR036190">
    <property type="entry name" value="Urocanase_sf"/>
</dbReference>
<dbReference type="NCBIfam" id="TIGR01228">
    <property type="entry name" value="hutU"/>
    <property type="match status" value="1"/>
</dbReference>
<dbReference type="NCBIfam" id="NF003820">
    <property type="entry name" value="PRK05414.1"/>
    <property type="match status" value="1"/>
</dbReference>
<dbReference type="PANTHER" id="PTHR12216">
    <property type="entry name" value="UROCANATE HYDRATASE"/>
    <property type="match status" value="1"/>
</dbReference>
<dbReference type="PANTHER" id="PTHR12216:SF4">
    <property type="entry name" value="UROCANATE HYDRATASE"/>
    <property type="match status" value="1"/>
</dbReference>
<dbReference type="Pfam" id="PF01175">
    <property type="entry name" value="Urocanase"/>
    <property type="match status" value="1"/>
</dbReference>
<dbReference type="Pfam" id="PF17392">
    <property type="entry name" value="Urocanase_C"/>
    <property type="match status" value="1"/>
</dbReference>
<dbReference type="Pfam" id="PF17391">
    <property type="entry name" value="Urocanase_N"/>
    <property type="match status" value="1"/>
</dbReference>
<dbReference type="PIRSF" id="PIRSF001423">
    <property type="entry name" value="Urocanate_hydrat"/>
    <property type="match status" value="1"/>
</dbReference>
<dbReference type="SUPFAM" id="SSF111326">
    <property type="entry name" value="Urocanase"/>
    <property type="match status" value="1"/>
</dbReference>
<dbReference type="PROSITE" id="PS01233">
    <property type="entry name" value="UROCANASE"/>
    <property type="match status" value="1"/>
</dbReference>
<name>HUTU_SHEB2</name>
<protein>
    <recommendedName>
        <fullName evidence="1">Urocanate hydratase</fullName>
        <shortName evidence="1">Urocanase</shortName>
        <ecNumber evidence="1">4.2.1.49</ecNumber>
    </recommendedName>
    <alternativeName>
        <fullName evidence="1">Imidazolonepropionate hydrolase</fullName>
    </alternativeName>
</protein>
<reference key="1">
    <citation type="submission" date="2008-12" db="EMBL/GenBank/DDBJ databases">
        <title>Complete sequence of chromosome of Shewanella baltica OS223.</title>
        <authorList>
            <consortium name="US DOE Joint Genome Institute"/>
            <person name="Lucas S."/>
            <person name="Copeland A."/>
            <person name="Lapidus A."/>
            <person name="Glavina del Rio T."/>
            <person name="Dalin E."/>
            <person name="Tice H."/>
            <person name="Bruce D."/>
            <person name="Goodwin L."/>
            <person name="Pitluck S."/>
            <person name="Chertkov O."/>
            <person name="Meincke L."/>
            <person name="Brettin T."/>
            <person name="Detter J.C."/>
            <person name="Han C."/>
            <person name="Kuske C.R."/>
            <person name="Larimer F."/>
            <person name="Land M."/>
            <person name="Hauser L."/>
            <person name="Kyrpides N."/>
            <person name="Ovchinnikova G."/>
            <person name="Brettar I."/>
            <person name="Rodrigues J."/>
            <person name="Konstantinidis K."/>
            <person name="Tiedje J."/>
        </authorList>
    </citation>
    <scope>NUCLEOTIDE SEQUENCE [LARGE SCALE GENOMIC DNA]</scope>
    <source>
        <strain>OS223</strain>
    </source>
</reference>